<protein>
    <recommendedName>
        <fullName evidence="5">Phenazine biosynthesis protein PhzD1</fullName>
    </recommendedName>
    <alternativeName>
        <fullName evidence="6">2-amino-4-deoxychorismate hydrolase</fullName>
        <ecNumber evidence="3">3.3.2.15</ecNumber>
    </alternativeName>
    <alternativeName>
        <fullName evidence="6">Isochorismatase</fullName>
    </alternativeName>
    <alternativeName>
        <fullName evidence="7">Trans-2,3-dihydro-3-hydroxyanthranilic acid synthase</fullName>
    </alternativeName>
</protein>
<organism>
    <name type="scientific">Pseudomonas aeruginosa (strain ATCC 15692 / DSM 22644 / CIP 104116 / JCM 14847 / LMG 12228 / 1C / PRS 101 / PAO1)</name>
    <dbReference type="NCBI Taxonomy" id="208964"/>
    <lineage>
        <taxon>Bacteria</taxon>
        <taxon>Pseudomonadati</taxon>
        <taxon>Pseudomonadota</taxon>
        <taxon>Gammaproteobacteria</taxon>
        <taxon>Pseudomonadales</taxon>
        <taxon>Pseudomonadaceae</taxon>
        <taxon>Pseudomonas</taxon>
    </lineage>
</organism>
<reference key="1">
    <citation type="journal article" date="2001" name="J. Bacteriol.">
        <title>Functional analysis of genes for biosynthesis of pyocyanin and phenazine-1-carboxamide from Pseudomonas aeruginosa PAO1.</title>
        <authorList>
            <person name="Mavrodi D.V."/>
            <person name="Bonsall R.F."/>
            <person name="Delaney S.M."/>
            <person name="Soule M.J."/>
            <person name="Phillips G."/>
            <person name="Thomashow L.S."/>
        </authorList>
    </citation>
    <scope>NUCLEOTIDE SEQUENCE [GENOMIC DNA]</scope>
    <scope>FUNCTION</scope>
    <scope>PATHWAY</scope>
    <source>
        <strain>ATCC 15692 / DSM 22644 / CIP 104116 / JCM 14847 / LMG 12228 / 1C / PRS 101 / PAO1</strain>
    </source>
</reference>
<reference key="2">
    <citation type="journal article" date="2000" name="Nature">
        <title>Complete genome sequence of Pseudomonas aeruginosa PAO1, an opportunistic pathogen.</title>
        <authorList>
            <person name="Stover C.K."/>
            <person name="Pham X.-Q.T."/>
            <person name="Erwin A.L."/>
            <person name="Mizoguchi S.D."/>
            <person name="Warrener P."/>
            <person name="Hickey M.J."/>
            <person name="Brinkman F.S.L."/>
            <person name="Hufnagle W.O."/>
            <person name="Kowalik D.J."/>
            <person name="Lagrou M."/>
            <person name="Garber R.L."/>
            <person name="Goltry L."/>
            <person name="Tolentino E."/>
            <person name="Westbrock-Wadman S."/>
            <person name="Yuan Y."/>
            <person name="Brody L.L."/>
            <person name="Coulter S.N."/>
            <person name="Folger K.R."/>
            <person name="Kas A."/>
            <person name="Larbig K."/>
            <person name="Lim R.M."/>
            <person name="Smith K.A."/>
            <person name="Spencer D.H."/>
            <person name="Wong G.K.-S."/>
            <person name="Wu Z."/>
            <person name="Paulsen I.T."/>
            <person name="Reizer J."/>
            <person name="Saier M.H. Jr."/>
            <person name="Hancock R.E.W."/>
            <person name="Lory S."/>
            <person name="Olson M.V."/>
        </authorList>
    </citation>
    <scope>NUCLEOTIDE SEQUENCE [LARGE SCALE GENOMIC DNA]</scope>
    <source>
        <strain evidence="10">ATCC 15692 / DSM 22644 / CIP 104116 / JCM 14847 / LMG 12228 / 1C / PRS 101 / PAO1</strain>
    </source>
</reference>
<reference key="3">
    <citation type="journal article" date="2001" name="J. Bacteriol.">
        <title>Promoter specificity elements in Pseudomonas aeruginosa quorum-sensing-controlled genes.</title>
        <authorList>
            <person name="Whiteley M."/>
            <person name="Greenberg E.P."/>
        </authorList>
    </citation>
    <scope>INDUCTION</scope>
</reference>
<reference key="4">
    <citation type="journal article" date="2003" name="Biochemistry">
        <title>Structure and mechanism of Pseudomonas aeruginosa PhzD, an isochorismatase from the phenazine biosynthetic pathway.</title>
        <authorList>
            <person name="Parsons J.F."/>
            <person name="Calabrese K."/>
            <person name="Eisenstein E."/>
            <person name="Ladner J.E."/>
        </authorList>
    </citation>
    <scope>FUNCTION</scope>
    <scope>CATALYTIC ACTIVITY</scope>
    <scope>BIOPHYSICOCHEMICAL PROPERTIES</scope>
    <scope>SUBUNIT</scope>
    <scope>SUBSTRATE SPECIFICITY</scope>
</reference>
<reference key="5">
    <citation type="journal article" date="2012" name="Proc. Natl. Acad. Sci. U.S.A.">
        <title>Redundant phenazine operons in Pseudomonas aeruginosa exhibit environment-dependent expression and differential roles in pathogenicity.</title>
        <authorList>
            <person name="Recinos D.A."/>
            <person name="Sekedat M.D."/>
            <person name="Hernandez A."/>
            <person name="Cohen T.S."/>
            <person name="Sakhtah H."/>
            <person name="Prince A.S."/>
            <person name="Price-Whelan A."/>
            <person name="Dietrich L.E."/>
        </authorList>
    </citation>
    <scope>FUNCTION</scope>
    <scope>INDUCTION</scope>
</reference>
<sequence>MSGIPEITAYPLPTAQQLPANLARWSLEPRRAVLLVHDMQRYFLRPLPESLRAGLVANAARLRRWCVEQGVQIAYTAQPGSMTEEQRGLLKDFWGPGMRASPADREVVEELAPGPDDWLLTKWRYSAFFHSDLLQRMRAAGRDQLVLCGVYAHVGVLISTVDAYSNDIQPFLVADAIADFSEAHHRMALEYAASRCAMVVTTDEVLE</sequence>
<name>PHZD1_PSEAE</name>
<proteinExistence type="evidence at protein level"/>
<feature type="chain" id="PRO_0000442350" description="Phenazine biosynthesis protein PhzD1">
    <location>
        <begin position="1"/>
        <end position="207"/>
    </location>
</feature>
<feature type="active site" description="Proton donor" evidence="1">
    <location>
        <position position="38"/>
    </location>
</feature>
<feature type="binding site" evidence="1">
    <location>
        <position position="78"/>
    </location>
    <ligand>
        <name>substrate</name>
    </ligand>
</feature>
<feature type="binding site" evidence="1">
    <location>
        <position position="87"/>
    </location>
    <ligand>
        <name>substrate</name>
    </ligand>
</feature>
<feature type="binding site" evidence="1">
    <location>
        <position position="122"/>
    </location>
    <ligand>
        <name>substrate</name>
    </ligand>
</feature>
<feature type="binding site" evidence="1">
    <location>
        <begin position="151"/>
        <end position="155"/>
    </location>
    <ligand>
        <name>substrate</name>
    </ligand>
</feature>
<evidence type="ECO:0000250" key="1">
    <source>
        <dbReference type="UniProtKB" id="P0DPC1"/>
    </source>
</evidence>
<evidence type="ECO:0000269" key="2">
    <source>
    </source>
</evidence>
<evidence type="ECO:0000269" key="3">
    <source>
    </source>
</evidence>
<evidence type="ECO:0000269" key="4">
    <source>
    </source>
</evidence>
<evidence type="ECO:0000303" key="5">
    <source>
    </source>
</evidence>
<evidence type="ECO:0000303" key="6">
    <source>
    </source>
</evidence>
<evidence type="ECO:0000305" key="7"/>
<evidence type="ECO:0000305" key="8">
    <source>
    </source>
</evidence>
<evidence type="ECO:0000312" key="9">
    <source>
        <dbReference type="EMBL" id="AAG07600.1"/>
    </source>
</evidence>
<evidence type="ECO:0000312" key="10">
    <source>
        <dbReference type="Proteomes" id="UP000002438"/>
    </source>
</evidence>
<comment type="function">
    <text evidence="3 4 8">Involved in the biosynthesis of the antibiotic phenazine, a nitrogen-containing heterocyclic molecule. PhzD1 (operon phzA1B1C1E1F1G1) has a role in the biosynthesis of the phenazine during planktonic growth (PubMed:23129634). Catalyzes the hydrolysis of the vinyl ether functional group of 2-amino-2-deoxyisochorismate (ADIC), yielding pyruvate and trans-2,3-dihydro-3-hydroxyanthranilic acid (DHHA) (PubMed:12741825, PubMed:23129634). Also able to act on isochorismate, chorismate and 4-amino-4-deoxychorismate (ADC) as substrates (PubMed:12741825).</text>
</comment>
<comment type="catalytic activity">
    <reaction evidence="3">
        <text>(2S)-2-amino-4-deoxychorismate + H2O = (5S,6S)-6-amino-5-hydroxycyclohexa-1,3-diene-1-carboxyate + pyruvate</text>
        <dbReference type="Rhea" id="RHEA:49456"/>
        <dbReference type="ChEBI" id="CHEBI:15361"/>
        <dbReference type="ChEBI" id="CHEBI:15377"/>
        <dbReference type="ChEBI" id="CHEBI:58792"/>
        <dbReference type="ChEBI" id="CHEBI:60849"/>
        <dbReference type="EC" id="3.3.2.15"/>
    </reaction>
</comment>
<comment type="biophysicochemical properties">
    <kinetics>
        <KM evidence="3">4 uM for isochorismate</KM>
        <KM evidence="3">68 uM for 2-amino-2-deoxyisochorismate</KM>
        <KM evidence="3">590 uM for 4-amino-4-deoxychorismate</KM>
        <KM evidence="3">983 uM for chorismate</KM>
        <text evidence="3">kcat is 7.3 sec(-1) with 2-amino-2-deoxyisochorismate as substrate. kcat is 1.2 sec(-1) with chorismate as substrate. kcat is 0.2 sec(-1) with isochorismate as substrate. kcat is 0.02 sec(-1) with 4-amino-4-deoxychorismate as substrate.</text>
    </kinetics>
</comment>
<comment type="pathway">
    <text evidence="8">Antibiotic biosynthesis; phenazine biosynthesis.</text>
</comment>
<comment type="subunit">
    <text evidence="3">Homodimer.</text>
</comment>
<comment type="induction">
    <text evidence="2 4">Under control of LasR (PubMed:11544214). In liquid cultures (aerobic), phz1 operon is induced by quinolone signal via 2-heptyl-3-hydroxy-4-quinolone (PQS) (PubMed:23129634). In biofilm (microaerobic), phz1 operon is not induced by PQS, because the biosynthesis of PQS by the monooxygenase PqsH requires molecular oxygen (PubMed:23129634).</text>
</comment>
<comment type="similarity">
    <text evidence="7">Belongs to the isochorismatase family.</text>
</comment>
<comment type="caution">
    <text evidence="7">The gene for this protein is part of the operon phzABCDEFG which is duplicated in P.aeruginosa. Cristallographic study (PubMed:12741825) has been arbitrarily placed in PhzD2 (AC P0DPC1), because it is impossible to differentiate between the duplicate which has been chosen for the study, and because PhzD2 (AC P0DPC1) displays an important role in phenazine production and host infection.</text>
</comment>
<keyword id="KW-0045">Antibiotic biosynthesis</keyword>
<keyword id="KW-0378">Hydrolase</keyword>
<keyword id="KW-1185">Reference proteome</keyword>
<gene>
    <name evidence="5" type="primary">phzD1</name>
    <name type="synonym">phzD</name>
    <name evidence="9" type="ordered locus">PA4213</name>
</gene>
<accession>P0DPB9</accession>
<accession>O33409</accession>
<accession>Q7DC80</accession>
<dbReference type="EC" id="3.3.2.15" evidence="3"/>
<dbReference type="EMBL" id="AF005404">
    <property type="protein sequence ID" value="AAC64487.1"/>
    <property type="molecule type" value="Genomic_DNA"/>
</dbReference>
<dbReference type="EMBL" id="AE004091">
    <property type="protein sequence ID" value="AAG07600.1"/>
    <property type="molecule type" value="Genomic_DNA"/>
</dbReference>
<dbReference type="PIR" id="H83118">
    <property type="entry name" value="H83118"/>
</dbReference>
<dbReference type="RefSeq" id="NP_252902.1">
    <property type="nucleotide sequence ID" value="NC_002516.2"/>
</dbReference>
<dbReference type="RefSeq" id="WP_003093625.1">
    <property type="nucleotide sequence ID" value="NZ_QZGE01000046.1"/>
</dbReference>
<dbReference type="SMR" id="P0DPB9"/>
<dbReference type="FunCoup" id="P0DPB9">
    <property type="interactions" value="256"/>
</dbReference>
<dbReference type="STRING" id="208964.PA1902"/>
<dbReference type="DrugBank" id="DB01942">
    <property type="generic name" value="Formic acid"/>
</dbReference>
<dbReference type="DrugBank" id="DB02793">
    <property type="generic name" value="Isochorismic Acid"/>
</dbReference>
<dbReference type="PaxDb" id="208964-PA1902"/>
<dbReference type="DNASU" id="881873"/>
<dbReference type="GeneID" id="880504"/>
<dbReference type="KEGG" id="pae:PA1902"/>
<dbReference type="KEGG" id="pae:PA4213"/>
<dbReference type="HOGENOM" id="CLU_068979_2_1_6"/>
<dbReference type="InParanoid" id="P0DPB9"/>
<dbReference type="OrthoDB" id="5794853at2"/>
<dbReference type="UniPathway" id="UPA00099"/>
<dbReference type="EvolutionaryTrace" id="P0DPB9"/>
<dbReference type="Proteomes" id="UP000002438">
    <property type="component" value="Chromosome"/>
</dbReference>
<dbReference type="GO" id="GO:0008908">
    <property type="term" value="F:isochorismatase activity"/>
    <property type="evidence" value="ECO:0007669"/>
    <property type="project" value="InterPro"/>
</dbReference>
<dbReference type="GO" id="GO:0002047">
    <property type="term" value="P:phenazine biosynthetic process"/>
    <property type="evidence" value="ECO:0007669"/>
    <property type="project" value="UniProtKB-UniPathway"/>
</dbReference>
<dbReference type="CDD" id="cd01013">
    <property type="entry name" value="isochorismatase"/>
    <property type="match status" value="1"/>
</dbReference>
<dbReference type="Gene3D" id="3.40.50.850">
    <property type="entry name" value="Isochorismatase-like"/>
    <property type="match status" value="1"/>
</dbReference>
<dbReference type="InterPro" id="IPR016291">
    <property type="entry name" value="Isochorismatase"/>
</dbReference>
<dbReference type="InterPro" id="IPR000868">
    <property type="entry name" value="Isochorismatase-like_dom"/>
</dbReference>
<dbReference type="InterPro" id="IPR050272">
    <property type="entry name" value="Isochorismatase-like_hydrls"/>
</dbReference>
<dbReference type="InterPro" id="IPR036380">
    <property type="entry name" value="Isochorismatase-like_sf"/>
</dbReference>
<dbReference type="PANTHER" id="PTHR43540:SF3">
    <property type="entry name" value="ENTEROBACTIN SYNTHASE COMPONENT B"/>
    <property type="match status" value="1"/>
</dbReference>
<dbReference type="PANTHER" id="PTHR43540">
    <property type="entry name" value="PEROXYUREIDOACRYLATE/UREIDOACRYLATE AMIDOHYDROLASE-RELATED"/>
    <property type="match status" value="1"/>
</dbReference>
<dbReference type="Pfam" id="PF00857">
    <property type="entry name" value="Isochorismatase"/>
    <property type="match status" value="1"/>
</dbReference>
<dbReference type="PIRSF" id="PIRSF001111">
    <property type="entry name" value="Isochorismatase"/>
    <property type="match status" value="1"/>
</dbReference>
<dbReference type="PRINTS" id="PR01398">
    <property type="entry name" value="ISCHRISMTASE"/>
</dbReference>
<dbReference type="SUPFAM" id="SSF52499">
    <property type="entry name" value="Isochorismatase-like hydrolases"/>
    <property type="match status" value="1"/>
</dbReference>